<evidence type="ECO:0000255" key="1">
    <source>
        <dbReference type="HAMAP-Rule" id="MF_00482"/>
    </source>
</evidence>
<evidence type="ECO:0007829" key="2">
    <source>
        <dbReference type="PDB" id="8WM6"/>
    </source>
</evidence>
<keyword id="KW-0002">3D-structure</keyword>
<keyword id="KW-0004">4Fe-4S</keyword>
<keyword id="KW-0148">Chlorophyll</keyword>
<keyword id="KW-0150">Chloroplast</keyword>
<keyword id="KW-0157">Chromophore</keyword>
<keyword id="KW-0249">Electron transport</keyword>
<keyword id="KW-0408">Iron</keyword>
<keyword id="KW-0411">Iron-sulfur</keyword>
<keyword id="KW-0460">Magnesium</keyword>
<keyword id="KW-0472">Membrane</keyword>
<keyword id="KW-0479">Metal-binding</keyword>
<keyword id="KW-0560">Oxidoreductase</keyword>
<keyword id="KW-0602">Photosynthesis</keyword>
<keyword id="KW-0603">Photosystem I</keyword>
<keyword id="KW-0934">Plastid</keyword>
<keyword id="KW-0793">Thylakoid</keyword>
<keyword id="KW-0812">Transmembrane</keyword>
<keyword id="KW-1133">Transmembrane helix</keyword>
<keyword id="KW-0813">Transport</keyword>
<protein>
    <recommendedName>
        <fullName evidence="1">Photosystem I P700 chlorophyll a apoprotein A2</fullName>
        <ecNumber evidence="1">1.97.1.12</ecNumber>
    </recommendedName>
    <alternativeName>
        <fullName evidence="1">PSI-B</fullName>
    </alternativeName>
    <alternativeName>
        <fullName evidence="1">PsaB</fullName>
    </alternativeName>
</protein>
<dbReference type="EC" id="1.97.1.12" evidence="1"/>
<dbReference type="EMBL" id="EF508371">
    <property type="protein sequence ID" value="ABO70803.1"/>
    <property type="molecule type" value="Genomic_DNA"/>
</dbReference>
<dbReference type="RefSeq" id="YP_001293575.1">
    <property type="nucleotide sequence ID" value="NC_009573.1"/>
</dbReference>
<dbReference type="PDB" id="8WM6">
    <property type="method" value="EM"/>
    <property type="resolution" value="2.70 A"/>
    <property type="chains" value="B=1-734"/>
</dbReference>
<dbReference type="PDB" id="8WMJ">
    <property type="method" value="EM"/>
    <property type="resolution" value="3.00 A"/>
    <property type="chains" value="B=1-734"/>
</dbReference>
<dbReference type="PDB" id="8WMV">
    <property type="method" value="EM"/>
    <property type="resolution" value="2.94 A"/>
    <property type="chains" value="B=1-734"/>
</dbReference>
<dbReference type="PDB" id="8WMW">
    <property type="method" value="EM"/>
    <property type="resolution" value="3.30 A"/>
    <property type="chains" value="B=1-734"/>
</dbReference>
<dbReference type="PDBsum" id="8WM6"/>
<dbReference type="PDBsum" id="8WMJ"/>
<dbReference type="PDBsum" id="8WMV"/>
<dbReference type="PDBsum" id="8WMW"/>
<dbReference type="EMDB" id="EMD-37642"/>
<dbReference type="EMDB" id="EMD-37654"/>
<dbReference type="EMDB" id="EMD-37659"/>
<dbReference type="EMDB" id="EMD-37660"/>
<dbReference type="SMR" id="A6MVZ6"/>
<dbReference type="GeneID" id="5228511"/>
<dbReference type="GO" id="GO:0009535">
    <property type="term" value="C:chloroplast thylakoid membrane"/>
    <property type="evidence" value="ECO:0007669"/>
    <property type="project" value="UniProtKB-SubCell"/>
</dbReference>
<dbReference type="GO" id="GO:0009522">
    <property type="term" value="C:photosystem I"/>
    <property type="evidence" value="ECO:0007669"/>
    <property type="project" value="UniProtKB-KW"/>
</dbReference>
<dbReference type="GO" id="GO:0051539">
    <property type="term" value="F:4 iron, 4 sulfur cluster binding"/>
    <property type="evidence" value="ECO:0007669"/>
    <property type="project" value="UniProtKB-KW"/>
</dbReference>
<dbReference type="GO" id="GO:0016168">
    <property type="term" value="F:chlorophyll binding"/>
    <property type="evidence" value="ECO:0007669"/>
    <property type="project" value="UniProtKB-KW"/>
</dbReference>
<dbReference type="GO" id="GO:0009055">
    <property type="term" value="F:electron transfer activity"/>
    <property type="evidence" value="ECO:0007669"/>
    <property type="project" value="UniProtKB-UniRule"/>
</dbReference>
<dbReference type="GO" id="GO:0000287">
    <property type="term" value="F:magnesium ion binding"/>
    <property type="evidence" value="ECO:0007669"/>
    <property type="project" value="UniProtKB-UniRule"/>
</dbReference>
<dbReference type="GO" id="GO:0016491">
    <property type="term" value="F:oxidoreductase activity"/>
    <property type="evidence" value="ECO:0007669"/>
    <property type="project" value="UniProtKB-KW"/>
</dbReference>
<dbReference type="GO" id="GO:0015979">
    <property type="term" value="P:photosynthesis"/>
    <property type="evidence" value="ECO:0007669"/>
    <property type="project" value="UniProtKB-UniRule"/>
</dbReference>
<dbReference type="FunFam" id="1.20.1130.10:FF:000001">
    <property type="entry name" value="Photosystem I P700 chlorophyll a apoprotein A2"/>
    <property type="match status" value="1"/>
</dbReference>
<dbReference type="Gene3D" id="1.20.1130.10">
    <property type="entry name" value="Photosystem I PsaA/PsaB"/>
    <property type="match status" value="1"/>
</dbReference>
<dbReference type="HAMAP" id="MF_00482">
    <property type="entry name" value="PSI_PsaB"/>
    <property type="match status" value="1"/>
</dbReference>
<dbReference type="InterPro" id="IPR001280">
    <property type="entry name" value="PSI_PsaA/B"/>
</dbReference>
<dbReference type="InterPro" id="IPR020586">
    <property type="entry name" value="PSI_PsaA/B_CS"/>
</dbReference>
<dbReference type="InterPro" id="IPR036408">
    <property type="entry name" value="PSI_PsaA/B_sf"/>
</dbReference>
<dbReference type="InterPro" id="IPR006244">
    <property type="entry name" value="PSI_PsaB"/>
</dbReference>
<dbReference type="NCBIfam" id="TIGR01336">
    <property type="entry name" value="psaB"/>
    <property type="match status" value="1"/>
</dbReference>
<dbReference type="PANTHER" id="PTHR30128">
    <property type="entry name" value="OUTER MEMBRANE PROTEIN, OMPA-RELATED"/>
    <property type="match status" value="1"/>
</dbReference>
<dbReference type="PANTHER" id="PTHR30128:SF19">
    <property type="entry name" value="PHOTOSYSTEM I P700 CHLOROPHYLL A APOPROTEIN A1-RELATED"/>
    <property type="match status" value="1"/>
</dbReference>
<dbReference type="Pfam" id="PF00223">
    <property type="entry name" value="PsaA_PsaB"/>
    <property type="match status" value="1"/>
</dbReference>
<dbReference type="PIRSF" id="PIRSF002905">
    <property type="entry name" value="PSI_A"/>
    <property type="match status" value="1"/>
</dbReference>
<dbReference type="PRINTS" id="PR00257">
    <property type="entry name" value="PHOTSYSPSAAB"/>
</dbReference>
<dbReference type="SUPFAM" id="SSF81558">
    <property type="entry name" value="Photosystem I subunits PsaA/PsaB"/>
    <property type="match status" value="1"/>
</dbReference>
<dbReference type="PROSITE" id="PS00419">
    <property type="entry name" value="PHOTOSYSTEM_I_PSAAB"/>
    <property type="match status" value="1"/>
</dbReference>
<reference key="1">
    <citation type="journal article" date="2007" name="Mol. Biol. Evol.">
        <title>Plastid genome sequence of the cryptophyte alga Rhodomonas salina CCMP1319: lateral transfer of putative DNA replication machinery and a test of chromist plastid phylogeny.</title>
        <authorList>
            <person name="Khan H."/>
            <person name="Parks N."/>
            <person name="Kozera C."/>
            <person name="Curtis B.A."/>
            <person name="Parsons B.J."/>
            <person name="Bowman S."/>
            <person name="Archibald J.M."/>
        </authorList>
    </citation>
    <scope>NUCLEOTIDE SEQUENCE [LARGE SCALE GENOMIC DNA]</scope>
    <source>
        <strain>CCMP1319 / NEPCC76 / CS-174</strain>
    </source>
</reference>
<feature type="chain" id="PRO_0000300056" description="Photosystem I P700 chlorophyll a apoprotein A2">
    <location>
        <begin position="1"/>
        <end position="734"/>
    </location>
</feature>
<feature type="transmembrane region" description="Helical; Name=I" evidence="1">
    <location>
        <begin position="46"/>
        <end position="69"/>
    </location>
</feature>
<feature type="transmembrane region" description="Helical; Name=II" evidence="1">
    <location>
        <begin position="135"/>
        <end position="158"/>
    </location>
</feature>
<feature type="transmembrane region" description="Helical; Name=III" evidence="1">
    <location>
        <begin position="175"/>
        <end position="199"/>
    </location>
</feature>
<feature type="transmembrane region" description="Helical; Name=IV" evidence="1">
    <location>
        <begin position="273"/>
        <end position="291"/>
    </location>
</feature>
<feature type="transmembrane region" description="Helical; Name=V" evidence="1">
    <location>
        <begin position="330"/>
        <end position="353"/>
    </location>
</feature>
<feature type="transmembrane region" description="Helical; Name=VI" evidence="1">
    <location>
        <begin position="369"/>
        <end position="395"/>
    </location>
</feature>
<feature type="transmembrane region" description="Helical; Name=VII" evidence="1">
    <location>
        <begin position="417"/>
        <end position="439"/>
    </location>
</feature>
<feature type="transmembrane region" description="Helical; Name=VIII" evidence="1">
    <location>
        <begin position="517"/>
        <end position="535"/>
    </location>
</feature>
<feature type="transmembrane region" description="Helical; Name=IX" evidence="1">
    <location>
        <begin position="575"/>
        <end position="596"/>
    </location>
</feature>
<feature type="transmembrane region" description="Helical; Name=X" evidence="1">
    <location>
        <begin position="643"/>
        <end position="665"/>
    </location>
</feature>
<feature type="transmembrane region" description="Helical; Name=XI" evidence="1">
    <location>
        <begin position="707"/>
        <end position="727"/>
    </location>
</feature>
<feature type="binding site" evidence="1">
    <location>
        <position position="559"/>
    </location>
    <ligand>
        <name>[4Fe-4S] cluster</name>
        <dbReference type="ChEBI" id="CHEBI:49883"/>
        <note>ligand shared between dimeric partners</note>
    </ligand>
</feature>
<feature type="binding site" evidence="1">
    <location>
        <position position="568"/>
    </location>
    <ligand>
        <name>[4Fe-4S] cluster</name>
        <dbReference type="ChEBI" id="CHEBI:49883"/>
        <note>ligand shared between dimeric partners</note>
    </ligand>
</feature>
<feature type="binding site" description="axial binding residue" evidence="1">
    <location>
        <position position="654"/>
    </location>
    <ligand>
        <name>chlorophyll a</name>
        <dbReference type="ChEBI" id="CHEBI:58416"/>
        <label>B1</label>
    </ligand>
    <ligandPart>
        <name>Mg</name>
        <dbReference type="ChEBI" id="CHEBI:25107"/>
    </ligandPart>
</feature>
<feature type="binding site" description="axial binding residue" evidence="1">
    <location>
        <position position="662"/>
    </location>
    <ligand>
        <name>chlorophyll a</name>
        <dbReference type="ChEBI" id="CHEBI:58416"/>
        <label>B3</label>
    </ligand>
    <ligandPart>
        <name>Mg</name>
        <dbReference type="ChEBI" id="CHEBI:25107"/>
    </ligandPart>
</feature>
<feature type="binding site" evidence="1">
    <location>
        <position position="670"/>
    </location>
    <ligand>
        <name>chlorophyll a</name>
        <dbReference type="ChEBI" id="CHEBI:58416"/>
        <label>B3</label>
    </ligand>
</feature>
<feature type="binding site" evidence="1">
    <location>
        <position position="671"/>
    </location>
    <ligand>
        <name>phylloquinone</name>
        <dbReference type="ChEBI" id="CHEBI:18067"/>
        <label>B</label>
    </ligand>
</feature>
<feature type="helix" evidence="2">
    <location>
        <begin position="10"/>
        <end position="13"/>
    </location>
</feature>
<feature type="helix" evidence="2">
    <location>
        <begin position="19"/>
        <end position="26"/>
    </location>
</feature>
<feature type="turn" evidence="2">
    <location>
        <begin position="27"/>
        <end position="29"/>
    </location>
</feature>
<feature type="helix" evidence="2">
    <location>
        <begin position="31"/>
        <end position="33"/>
    </location>
</feature>
<feature type="helix" evidence="2">
    <location>
        <begin position="39"/>
        <end position="71"/>
    </location>
</feature>
<feature type="helix" evidence="2">
    <location>
        <begin position="74"/>
        <end position="79"/>
    </location>
</feature>
<feature type="turn" evidence="2">
    <location>
        <begin position="81"/>
        <end position="83"/>
    </location>
</feature>
<feature type="strand" evidence="2">
    <location>
        <begin position="87"/>
        <end position="90"/>
    </location>
</feature>
<feature type="helix" evidence="2">
    <location>
        <begin position="98"/>
        <end position="103"/>
    </location>
</feature>
<feature type="strand" evidence="2">
    <location>
        <begin position="109"/>
        <end position="111"/>
    </location>
</feature>
<feature type="strand" evidence="2">
    <location>
        <begin position="113"/>
        <end position="115"/>
    </location>
</feature>
<feature type="helix" evidence="2">
    <location>
        <begin position="120"/>
        <end position="126"/>
    </location>
</feature>
<feature type="helix" evidence="2">
    <location>
        <begin position="132"/>
        <end position="155"/>
    </location>
</feature>
<feature type="turn" evidence="2">
    <location>
        <begin position="159"/>
        <end position="161"/>
    </location>
</feature>
<feature type="helix" evidence="2">
    <location>
        <begin position="165"/>
        <end position="168"/>
    </location>
</feature>
<feature type="helix" evidence="2">
    <location>
        <begin position="171"/>
        <end position="180"/>
    </location>
</feature>
<feature type="turn" evidence="2">
    <location>
        <begin position="181"/>
        <end position="183"/>
    </location>
</feature>
<feature type="helix" evidence="2">
    <location>
        <begin position="184"/>
        <end position="196"/>
    </location>
</feature>
<feature type="helix" evidence="2">
    <location>
        <begin position="198"/>
        <end position="202"/>
    </location>
</feature>
<feature type="turn" evidence="2">
    <location>
        <begin position="209"/>
        <end position="211"/>
    </location>
</feature>
<feature type="helix" evidence="2">
    <location>
        <begin position="212"/>
        <end position="214"/>
    </location>
</feature>
<feature type="strand" evidence="2">
    <location>
        <begin position="217"/>
        <end position="220"/>
    </location>
</feature>
<feature type="turn" evidence="2">
    <location>
        <begin position="223"/>
        <end position="228"/>
    </location>
</feature>
<feature type="helix" evidence="2">
    <location>
        <begin position="230"/>
        <end position="233"/>
    </location>
</feature>
<feature type="strand" evidence="2">
    <location>
        <begin position="234"/>
        <end position="236"/>
    </location>
</feature>
<feature type="turn" evidence="2">
    <location>
        <begin position="263"/>
        <end position="265"/>
    </location>
</feature>
<feature type="helix" evidence="2">
    <location>
        <begin position="270"/>
        <end position="287"/>
    </location>
</feature>
<feature type="strand" evidence="2">
    <location>
        <begin position="293"/>
        <end position="296"/>
    </location>
</feature>
<feature type="helix" evidence="2">
    <location>
        <begin position="301"/>
        <end position="307"/>
    </location>
</feature>
<feature type="turn" evidence="2">
    <location>
        <begin position="314"/>
        <end position="317"/>
    </location>
</feature>
<feature type="turn" evidence="2">
    <location>
        <begin position="319"/>
        <end position="321"/>
    </location>
</feature>
<feature type="helix" evidence="2">
    <location>
        <begin position="322"/>
        <end position="328"/>
    </location>
</feature>
<feature type="helix" evidence="2">
    <location>
        <begin position="330"/>
        <end position="354"/>
    </location>
</feature>
<feature type="turn" evidence="2">
    <location>
        <begin position="359"/>
        <end position="362"/>
    </location>
</feature>
<feature type="helix" evidence="2">
    <location>
        <begin position="365"/>
        <end position="396"/>
    </location>
</feature>
<feature type="turn" evidence="2">
    <location>
        <begin position="400"/>
        <end position="405"/>
    </location>
</feature>
<feature type="helix" evidence="2">
    <location>
        <begin position="407"/>
        <end position="413"/>
    </location>
</feature>
<feature type="helix" evidence="2">
    <location>
        <begin position="415"/>
        <end position="445"/>
    </location>
</feature>
<feature type="helix" evidence="2">
    <location>
        <begin position="449"/>
        <end position="451"/>
    </location>
</feature>
<feature type="helix" evidence="2">
    <location>
        <begin position="458"/>
        <end position="466"/>
    </location>
</feature>
<feature type="strand" evidence="2">
    <location>
        <begin position="479"/>
        <end position="482"/>
    </location>
</feature>
<feature type="helix" evidence="2">
    <location>
        <begin position="484"/>
        <end position="488"/>
    </location>
</feature>
<feature type="turn" evidence="2">
    <location>
        <begin position="490"/>
        <end position="493"/>
    </location>
</feature>
<feature type="helix" evidence="2">
    <location>
        <begin position="494"/>
        <end position="501"/>
    </location>
</feature>
<feature type="helix" evidence="2">
    <location>
        <begin position="514"/>
        <end position="539"/>
    </location>
</feature>
<feature type="helix" evidence="2">
    <location>
        <begin position="550"/>
        <end position="552"/>
    </location>
</feature>
<feature type="helix" evidence="2">
    <location>
        <begin position="563"/>
        <end position="565"/>
    </location>
</feature>
<feature type="helix" evidence="2">
    <location>
        <begin position="572"/>
        <end position="603"/>
    </location>
</feature>
<feature type="helix" evidence="2">
    <location>
        <begin position="606"/>
        <end position="612"/>
    </location>
</feature>
<feature type="helix" evidence="2">
    <location>
        <begin position="616"/>
        <end position="621"/>
    </location>
</feature>
<feature type="helix" evidence="2">
    <location>
        <begin position="624"/>
        <end position="632"/>
    </location>
</feature>
<feature type="strand" evidence="2">
    <location>
        <begin position="634"/>
        <end position="636"/>
    </location>
</feature>
<feature type="helix" evidence="2">
    <location>
        <begin position="644"/>
        <end position="665"/>
    </location>
</feature>
<feature type="helix" evidence="2">
    <location>
        <begin position="668"/>
        <end position="684"/>
    </location>
</feature>
<feature type="turn" evidence="2">
    <location>
        <begin position="686"/>
        <end position="690"/>
    </location>
</feature>
<feature type="strand" evidence="2">
    <location>
        <begin position="694"/>
        <end position="696"/>
    </location>
</feature>
<feature type="helix" evidence="2">
    <location>
        <begin position="702"/>
        <end position="732"/>
    </location>
</feature>
<gene>
    <name evidence="1" type="primary">psaB</name>
</gene>
<organism>
    <name type="scientific">Rhodomonas salina</name>
    <name type="common">Cryptomonas salina</name>
    <dbReference type="NCBI Taxonomy" id="52970"/>
    <lineage>
        <taxon>Eukaryota</taxon>
        <taxon>Cryptophyceae</taxon>
        <taxon>Pyrenomonadales</taxon>
        <taxon>Pyrenomonadaceae</taxon>
        <taxon>Rhodomonas</taxon>
    </lineage>
</organism>
<sequence>MATKFPKFSQALAQDPATRRIWYGLATAHDLESHDGMTEENLYQKIFASHFGHLAVIFLWTSGNLFHVAWQGNFEQWVLNPLKVKPIAHAIWDPHFGQPAVKAFTKGGVSYPVNIATSGVYHWWYTIGMRSNTDLYAGSLFLLFLAGVFLFAGWLHLQPKFRPGLSWFKNNESRLNHHLSGLFGFSSLAWSAHLIHVAIPEARGQHVCWDNFTKVAPHPAGLQPFFTGNWGAYAASPDTTNHIFGTSEGAGTAILTFLGGFHPQTQALWLTDIAHHHLAIGVVFIFAGHMYRTNWGIGHSLKEILDAHRPPGGRLGAGHKGIFETLTNSLHFQLGLALASLGVITSLVAQHMYALPSYAFIAKDYVTQSALYTHHQYIAGFLMVGAFAHGAIFFVRDYDPEQNKNNVLARILDHKEAIISHLSWVSLFLGFHTLGIYVHNDVVVAFGTPEKQILVEPVFAQWIQASSGKALYGFDVLLSSTNSVAANASSNIWLPGWLEAINSGKNSLFLPIGPGDFLIHHAIALALHTTTLILVKGALDARGSKLMPDKKDFGYAFPCDGPGRGGTCDISAWDAFYLSMFWMLNTIGWVTFYWHWKHITIWQGNAGQFNESSTYIMGWLRDYLWLNSSPLINGYNPFGMNSLSVWSWMFLFGHLIWATGFMFLISWRGYWQELIETLVWAHERTPLANLVRWKDKPVALSIVQARLVGLIHFTAGYIFTYAAFVIASTTGKFG</sequence>
<proteinExistence type="evidence at protein level"/>
<name>PSAB_RHDSA</name>
<comment type="function">
    <text evidence="1">PsaA and PsaB bind P700, the primary electron donor of photosystem I (PSI), as well as the electron acceptors A0, A1 and FX. PSI is a plastocyanin/cytochrome c6-ferredoxin oxidoreductase, converting photonic excitation into a charge separation, which transfers an electron from the donor P700 chlorophyll pair to the spectroscopically characterized acceptors A0, A1, FX, FA and FB in turn. Oxidized P700 is reduced on the lumenal side of the thylakoid membrane by plastocyanin or cytochrome c6.</text>
</comment>
<comment type="catalytic activity">
    <reaction evidence="1">
        <text>reduced [plastocyanin] + hnu + oxidized [2Fe-2S]-[ferredoxin] = oxidized [plastocyanin] + reduced [2Fe-2S]-[ferredoxin]</text>
        <dbReference type="Rhea" id="RHEA:30407"/>
        <dbReference type="Rhea" id="RHEA-COMP:10000"/>
        <dbReference type="Rhea" id="RHEA-COMP:10001"/>
        <dbReference type="Rhea" id="RHEA-COMP:10039"/>
        <dbReference type="Rhea" id="RHEA-COMP:10040"/>
        <dbReference type="ChEBI" id="CHEBI:29036"/>
        <dbReference type="ChEBI" id="CHEBI:30212"/>
        <dbReference type="ChEBI" id="CHEBI:33737"/>
        <dbReference type="ChEBI" id="CHEBI:33738"/>
        <dbReference type="ChEBI" id="CHEBI:49552"/>
        <dbReference type="EC" id="1.97.1.12"/>
    </reaction>
</comment>
<comment type="cofactor">
    <text evidence="1">P700 is a chlorophyll a/chlorophyll a' dimer, A0 is one or more chlorophyll a, A1 is one or both phylloquinones and FX is a shared 4Fe-4S iron-sulfur center.</text>
</comment>
<comment type="subunit">
    <text evidence="1">The PsaA/B heterodimer binds the P700 chlorophyll special pair and subsequent electron acceptors. PSI consists of a core antenna complex that captures photons, and an electron transfer chain that converts photonic excitation into a charge separation. The eukaryotic PSI reaction center is composed of at least 11 subunits.</text>
</comment>
<comment type="subcellular location">
    <subcellularLocation>
        <location evidence="1">Plastid</location>
        <location evidence="1">Chloroplast thylakoid membrane</location>
        <topology evidence="1">Multi-pass membrane protein</topology>
    </subcellularLocation>
</comment>
<comment type="similarity">
    <text evidence="1">Belongs to the PsaA/PsaB family.</text>
</comment>
<geneLocation type="chloroplast"/>
<accession>A6MVZ6</accession>